<comment type="function">
    <text>Catalyzes the transfer of an acetyl group from acetyl-CoA to tetrahydrodipicolinate.</text>
</comment>
<comment type="catalytic activity">
    <reaction evidence="1 2 3">
        <text>(S)-2,3,4,5-tetrahydrodipicolinate + acetyl-CoA + H2O = L-2-acetamido-6-oxoheptanedioate + CoA</text>
        <dbReference type="Rhea" id="RHEA:13085"/>
        <dbReference type="ChEBI" id="CHEBI:15377"/>
        <dbReference type="ChEBI" id="CHEBI:16845"/>
        <dbReference type="ChEBI" id="CHEBI:57287"/>
        <dbReference type="ChEBI" id="CHEBI:57288"/>
        <dbReference type="ChEBI" id="CHEBI:58117"/>
        <dbReference type="EC" id="2.3.1.89"/>
    </reaction>
</comment>
<comment type="pathway">
    <text evidence="1">Amino-acid biosynthesis; L-lysine biosynthesis via DAP pathway; LL-2,6-diaminopimelate from (S)-tetrahydrodipicolinate (acetylase route): step 1/3.</text>
</comment>
<comment type="similarity">
    <text evidence="1">Belongs to the transferase hexapeptide repeat family. DapH subfamily.</text>
</comment>
<accession>O34981</accession>
<accession>Q796K1</accession>
<evidence type="ECO:0000255" key="1">
    <source>
        <dbReference type="HAMAP-Rule" id="MF_01691"/>
    </source>
</evidence>
<evidence type="ECO:0000269" key="2">
    <source>
    </source>
</evidence>
<evidence type="ECO:0000269" key="3">
    <source>
    </source>
</evidence>
<evidence type="ECO:0000305" key="4"/>
<keyword id="KW-0012">Acyltransferase</keyword>
<keyword id="KW-0028">Amino-acid biosynthesis</keyword>
<keyword id="KW-0220">Diaminopimelate biosynthesis</keyword>
<keyword id="KW-0457">Lysine biosynthesis</keyword>
<keyword id="KW-1185">Reference proteome</keyword>
<keyword id="KW-0677">Repeat</keyword>
<keyword id="KW-0808">Transferase</keyword>
<dbReference type="EC" id="2.3.1.89" evidence="1"/>
<dbReference type="EMBL" id="AJ222587">
    <property type="protein sequence ID" value="CAA10880.1"/>
    <property type="molecule type" value="Genomic_DNA"/>
</dbReference>
<dbReference type="EMBL" id="AL009126">
    <property type="protein sequence ID" value="CAB13291.2"/>
    <property type="molecule type" value="Genomic_DNA"/>
</dbReference>
<dbReference type="PIR" id="F69866">
    <property type="entry name" value="F69866"/>
</dbReference>
<dbReference type="RefSeq" id="NP_389301.2">
    <property type="nucleotide sequence ID" value="NC_000964.3"/>
</dbReference>
<dbReference type="SMR" id="O34981"/>
<dbReference type="FunCoup" id="O34981">
    <property type="interactions" value="156"/>
</dbReference>
<dbReference type="IntAct" id="O34981">
    <property type="interactions" value="1"/>
</dbReference>
<dbReference type="MINT" id="O34981"/>
<dbReference type="STRING" id="224308.BSU14180"/>
<dbReference type="jPOST" id="O34981"/>
<dbReference type="PaxDb" id="224308-BSU14180"/>
<dbReference type="EnsemblBacteria" id="CAB13291">
    <property type="protein sequence ID" value="CAB13291"/>
    <property type="gene ID" value="BSU_14180"/>
</dbReference>
<dbReference type="GeneID" id="939193"/>
<dbReference type="KEGG" id="bsu:BSU14180"/>
<dbReference type="PATRIC" id="fig|224308.179.peg.1547"/>
<dbReference type="eggNOG" id="COG2171">
    <property type="taxonomic scope" value="Bacteria"/>
</dbReference>
<dbReference type="InParanoid" id="O34981"/>
<dbReference type="OrthoDB" id="9788080at2"/>
<dbReference type="PhylomeDB" id="O34981"/>
<dbReference type="BioCyc" id="BSUB:BSU14180-MONOMER"/>
<dbReference type="UniPathway" id="UPA00034">
    <property type="reaction ID" value="UER00022"/>
</dbReference>
<dbReference type="PRO" id="PR:O34981"/>
<dbReference type="Proteomes" id="UP000001570">
    <property type="component" value="Chromosome"/>
</dbReference>
<dbReference type="GO" id="GO:0047200">
    <property type="term" value="F:tetrahydrodipicolinate N-acetyltransferase activity"/>
    <property type="evidence" value="ECO:0007669"/>
    <property type="project" value="UniProtKB-EC"/>
</dbReference>
<dbReference type="GO" id="GO:0019877">
    <property type="term" value="P:diaminopimelate biosynthetic process"/>
    <property type="evidence" value="ECO:0007669"/>
    <property type="project" value="UniProtKB-UniRule"/>
</dbReference>
<dbReference type="GO" id="GO:0009089">
    <property type="term" value="P:lysine biosynthetic process via diaminopimelate"/>
    <property type="evidence" value="ECO:0007669"/>
    <property type="project" value="UniProtKB-UniRule"/>
</dbReference>
<dbReference type="CDD" id="cd03350">
    <property type="entry name" value="LbH_THP_succinylT"/>
    <property type="match status" value="1"/>
</dbReference>
<dbReference type="Gene3D" id="2.160.10.10">
    <property type="entry name" value="Hexapeptide repeat proteins"/>
    <property type="match status" value="1"/>
</dbReference>
<dbReference type="Gene3D" id="3.30.70.250">
    <property type="entry name" value="Malonyl-CoA ACP transacylase, ACP-binding"/>
    <property type="match status" value="1"/>
</dbReference>
<dbReference type="HAMAP" id="MF_01691">
    <property type="entry name" value="DapH"/>
    <property type="match status" value="1"/>
</dbReference>
<dbReference type="InterPro" id="IPR019873">
    <property type="entry name" value="DapH"/>
</dbReference>
<dbReference type="InterPro" id="IPR013710">
    <property type="entry name" value="DapH_N"/>
</dbReference>
<dbReference type="InterPro" id="IPR001451">
    <property type="entry name" value="Hexapep"/>
</dbReference>
<dbReference type="InterPro" id="IPR018357">
    <property type="entry name" value="Hexapep_transf_CS"/>
</dbReference>
<dbReference type="InterPro" id="IPR050179">
    <property type="entry name" value="Trans_hexapeptide_repeat"/>
</dbReference>
<dbReference type="InterPro" id="IPR011004">
    <property type="entry name" value="Trimer_LpxA-like_sf"/>
</dbReference>
<dbReference type="NCBIfam" id="TIGR03532">
    <property type="entry name" value="DapD_Ac"/>
    <property type="match status" value="1"/>
</dbReference>
<dbReference type="PANTHER" id="PTHR43300:SF10">
    <property type="entry name" value="2,3,4,5-TETRAHYDROPYRIDINE-2,6-DICARBOXYLATE N-ACETYLTRANSFERASE"/>
    <property type="match status" value="1"/>
</dbReference>
<dbReference type="PANTHER" id="PTHR43300">
    <property type="entry name" value="ACETYLTRANSFERASE"/>
    <property type="match status" value="1"/>
</dbReference>
<dbReference type="Pfam" id="PF08503">
    <property type="entry name" value="DapH_N"/>
    <property type="match status" value="1"/>
</dbReference>
<dbReference type="Pfam" id="PF00132">
    <property type="entry name" value="Hexapep"/>
    <property type="match status" value="1"/>
</dbReference>
<dbReference type="Pfam" id="PF14602">
    <property type="entry name" value="Hexapep_2"/>
    <property type="match status" value="1"/>
</dbReference>
<dbReference type="SUPFAM" id="SSF51161">
    <property type="entry name" value="Trimeric LpxA-like enzymes"/>
    <property type="match status" value="1"/>
</dbReference>
<dbReference type="PROSITE" id="PS00101">
    <property type="entry name" value="HEXAPEP_TRANSFERASES"/>
    <property type="match status" value="1"/>
</dbReference>
<protein>
    <recommendedName>
        <fullName evidence="1">2,3,4,5-tetrahydropyridine-2,6-dicarboxylate N-acetyltransferase</fullName>
        <ecNumber evidence="1">2.3.1.89</ecNumber>
    </recommendedName>
    <alternativeName>
        <fullName evidence="1">Tetrahydrodipicolinate N-acetyltransferase</fullName>
        <shortName evidence="1">THP acetyltransferase</shortName>
        <shortName evidence="1">Tetrahydropicolinate acetylase</shortName>
    </alternativeName>
</protein>
<proteinExistence type="evidence at protein level"/>
<reference key="1">
    <citation type="submission" date="1997-11" db="EMBL/GenBank/DDBJ databases">
        <title>Sequence of the Bacillus subtilis chromosome from ykuA to cse-15.</title>
        <authorList>
            <person name="Scanlan E."/>
            <person name="Devine K.M."/>
        </authorList>
    </citation>
    <scope>NUCLEOTIDE SEQUENCE [GENOMIC DNA]</scope>
    <source>
        <strain>168</strain>
    </source>
</reference>
<reference key="2">
    <citation type="journal article" date="1997" name="Nature">
        <title>The complete genome sequence of the Gram-positive bacterium Bacillus subtilis.</title>
        <authorList>
            <person name="Kunst F."/>
            <person name="Ogasawara N."/>
            <person name="Moszer I."/>
            <person name="Albertini A.M."/>
            <person name="Alloni G."/>
            <person name="Azevedo V."/>
            <person name="Bertero M.G."/>
            <person name="Bessieres P."/>
            <person name="Bolotin A."/>
            <person name="Borchert S."/>
            <person name="Borriss R."/>
            <person name="Boursier L."/>
            <person name="Brans A."/>
            <person name="Braun M."/>
            <person name="Brignell S.C."/>
            <person name="Bron S."/>
            <person name="Brouillet S."/>
            <person name="Bruschi C.V."/>
            <person name="Caldwell B."/>
            <person name="Capuano V."/>
            <person name="Carter N.M."/>
            <person name="Choi S.-K."/>
            <person name="Codani J.-J."/>
            <person name="Connerton I.F."/>
            <person name="Cummings N.J."/>
            <person name="Daniel R.A."/>
            <person name="Denizot F."/>
            <person name="Devine K.M."/>
            <person name="Duesterhoeft A."/>
            <person name="Ehrlich S.D."/>
            <person name="Emmerson P.T."/>
            <person name="Entian K.-D."/>
            <person name="Errington J."/>
            <person name="Fabret C."/>
            <person name="Ferrari E."/>
            <person name="Foulger D."/>
            <person name="Fritz C."/>
            <person name="Fujita M."/>
            <person name="Fujita Y."/>
            <person name="Fuma S."/>
            <person name="Galizzi A."/>
            <person name="Galleron N."/>
            <person name="Ghim S.-Y."/>
            <person name="Glaser P."/>
            <person name="Goffeau A."/>
            <person name="Golightly E.J."/>
            <person name="Grandi G."/>
            <person name="Guiseppi G."/>
            <person name="Guy B.J."/>
            <person name="Haga K."/>
            <person name="Haiech J."/>
            <person name="Harwood C.R."/>
            <person name="Henaut A."/>
            <person name="Hilbert H."/>
            <person name="Holsappel S."/>
            <person name="Hosono S."/>
            <person name="Hullo M.-F."/>
            <person name="Itaya M."/>
            <person name="Jones L.-M."/>
            <person name="Joris B."/>
            <person name="Karamata D."/>
            <person name="Kasahara Y."/>
            <person name="Klaerr-Blanchard M."/>
            <person name="Klein C."/>
            <person name="Kobayashi Y."/>
            <person name="Koetter P."/>
            <person name="Koningstein G."/>
            <person name="Krogh S."/>
            <person name="Kumano M."/>
            <person name="Kurita K."/>
            <person name="Lapidus A."/>
            <person name="Lardinois S."/>
            <person name="Lauber J."/>
            <person name="Lazarevic V."/>
            <person name="Lee S.-M."/>
            <person name="Levine A."/>
            <person name="Liu H."/>
            <person name="Masuda S."/>
            <person name="Mauel C."/>
            <person name="Medigue C."/>
            <person name="Medina N."/>
            <person name="Mellado R.P."/>
            <person name="Mizuno M."/>
            <person name="Moestl D."/>
            <person name="Nakai S."/>
            <person name="Noback M."/>
            <person name="Noone D."/>
            <person name="O'Reilly M."/>
            <person name="Ogawa K."/>
            <person name="Ogiwara A."/>
            <person name="Oudega B."/>
            <person name="Park S.-H."/>
            <person name="Parro V."/>
            <person name="Pohl T.M."/>
            <person name="Portetelle D."/>
            <person name="Porwollik S."/>
            <person name="Prescott A.M."/>
            <person name="Presecan E."/>
            <person name="Pujic P."/>
            <person name="Purnelle B."/>
            <person name="Rapoport G."/>
            <person name="Rey M."/>
            <person name="Reynolds S."/>
            <person name="Rieger M."/>
            <person name="Rivolta C."/>
            <person name="Rocha E."/>
            <person name="Roche B."/>
            <person name="Rose M."/>
            <person name="Sadaie Y."/>
            <person name="Sato T."/>
            <person name="Scanlan E."/>
            <person name="Schleich S."/>
            <person name="Schroeter R."/>
            <person name="Scoffone F."/>
            <person name="Sekiguchi J."/>
            <person name="Sekowska A."/>
            <person name="Seror S.J."/>
            <person name="Serror P."/>
            <person name="Shin B.-S."/>
            <person name="Soldo B."/>
            <person name="Sorokin A."/>
            <person name="Tacconi E."/>
            <person name="Takagi T."/>
            <person name="Takahashi H."/>
            <person name="Takemaru K."/>
            <person name="Takeuchi M."/>
            <person name="Tamakoshi A."/>
            <person name="Tanaka T."/>
            <person name="Terpstra P."/>
            <person name="Tognoni A."/>
            <person name="Tosato V."/>
            <person name="Uchiyama S."/>
            <person name="Vandenbol M."/>
            <person name="Vannier F."/>
            <person name="Vassarotti A."/>
            <person name="Viari A."/>
            <person name="Wambutt R."/>
            <person name="Wedler E."/>
            <person name="Wedler H."/>
            <person name="Weitzenegger T."/>
            <person name="Winters P."/>
            <person name="Wipat A."/>
            <person name="Yamamoto H."/>
            <person name="Yamane K."/>
            <person name="Yasumoto K."/>
            <person name="Yata K."/>
            <person name="Yoshida K."/>
            <person name="Yoshikawa H.-F."/>
            <person name="Zumstein E."/>
            <person name="Yoshikawa H."/>
            <person name="Danchin A."/>
        </authorList>
    </citation>
    <scope>NUCLEOTIDE SEQUENCE [LARGE SCALE GENOMIC DNA]</scope>
    <source>
        <strain>168</strain>
    </source>
</reference>
<reference key="3">
    <citation type="journal article" date="2009" name="Microbiology">
        <title>From a consortium sequence to a unified sequence: the Bacillus subtilis 168 reference genome a decade later.</title>
        <authorList>
            <person name="Barbe V."/>
            <person name="Cruveiller S."/>
            <person name="Kunst F."/>
            <person name="Lenoble P."/>
            <person name="Meurice G."/>
            <person name="Sekowska A."/>
            <person name="Vallenet D."/>
            <person name="Wang T."/>
            <person name="Moszer I."/>
            <person name="Medigue C."/>
            <person name="Danchin A."/>
        </authorList>
    </citation>
    <scope>SEQUENCE REVISION TO 190</scope>
</reference>
<reference key="4">
    <citation type="journal article" date="1970" name="J. Bacteriol.">
        <title>Bacterial distribution of the use of succinyl and acetyl blocking groups in diaminopimelic acid biosynthesis.</title>
        <authorList>
            <person name="Weinberger S."/>
            <person name="Gilvarg C."/>
        </authorList>
    </citation>
    <scope>CATALYTIC ACTIVITY</scope>
</reference>
<reference key="5">
    <citation type="journal article" date="2002" name="Protein Sci.">
        <title>Acyl group specificity at the active site of tetrahydrodipicolinate N-succinyltransferase.</title>
        <authorList>
            <person name="Beaman T.W."/>
            <person name="Vogel K.W."/>
            <person name="Drueckhammer D.G."/>
            <person name="Blanchard J.S."/>
            <person name="Roderick S.L."/>
        </authorList>
    </citation>
    <scope>CATALYTIC ACTIVITY</scope>
</reference>
<name>DAPH_BACSU</name>
<sequence>MKMMDANEIISFIQNSTKSTPVKVYVKGELEGINFGESAKAFINGNTGVVFGEWSEIQTAIEENQSKIEDYVVENDRRNSAIPMLDLKNIKARIEPGAIIRDQVEIGDNAVIMMGASINIGSVIGEGTMIDMNVVLGGRATVGKNCHIGAGSVLAGVIEPPSAKPVVIEDDVVIGANAVVLEGVTVGKGAVVAAGAIVVNDVEPYTVVAGTPAKKIKDIDEKTKGKTEIKQELRQL</sequence>
<gene>
    <name evidence="1" type="primary">dapH</name>
    <name type="synonym">ykuQ</name>
    <name type="ordered locus">BSU14180</name>
</gene>
<organism>
    <name type="scientific">Bacillus subtilis (strain 168)</name>
    <dbReference type="NCBI Taxonomy" id="224308"/>
    <lineage>
        <taxon>Bacteria</taxon>
        <taxon>Bacillati</taxon>
        <taxon>Bacillota</taxon>
        <taxon>Bacilli</taxon>
        <taxon>Bacillales</taxon>
        <taxon>Bacillaceae</taxon>
        <taxon>Bacillus</taxon>
    </lineage>
</organism>
<feature type="chain" id="PRO_0000360657" description="2,3,4,5-tetrahydropyridine-2,6-dicarboxylate N-acetyltransferase">
    <location>
        <begin position="1"/>
        <end position="236"/>
    </location>
</feature>
<feature type="sequence conflict" description="In Ref. 1; CAA10880." evidence="4" ref="1">
    <original>A</original>
    <variation>P</variation>
    <location>
        <position position="190"/>
    </location>
</feature>